<accession>A1WH11</accession>
<reference key="1">
    <citation type="submission" date="2006-12" db="EMBL/GenBank/DDBJ databases">
        <title>Complete sequence of chromosome 1 of Verminephrobacter eiseniae EF01-2.</title>
        <authorList>
            <person name="Copeland A."/>
            <person name="Lucas S."/>
            <person name="Lapidus A."/>
            <person name="Barry K."/>
            <person name="Detter J.C."/>
            <person name="Glavina del Rio T."/>
            <person name="Dalin E."/>
            <person name="Tice H."/>
            <person name="Pitluck S."/>
            <person name="Chertkov O."/>
            <person name="Brettin T."/>
            <person name="Bruce D."/>
            <person name="Han C."/>
            <person name="Tapia R."/>
            <person name="Gilna P."/>
            <person name="Schmutz J."/>
            <person name="Larimer F."/>
            <person name="Land M."/>
            <person name="Hauser L."/>
            <person name="Kyrpides N."/>
            <person name="Kim E."/>
            <person name="Stahl D."/>
            <person name="Richardson P."/>
        </authorList>
    </citation>
    <scope>NUCLEOTIDE SEQUENCE [LARGE SCALE GENOMIC DNA]</scope>
    <source>
        <strain>EF01-2</strain>
    </source>
</reference>
<sequence>MTTIPITKRGAEKLKQELHHLKTVERPSVITAIAEARAQGDLSENADYDAAKDRQGFVEGRIQEIEGKLSVAQVIDPGEVDGGGKVVFGATVQLEDEESGDTVTYQIVGEDEADLKQGLINISSPIARALIGKEEGDTAEVQAPSGIRRYEVVAVSYR</sequence>
<keyword id="KW-0238">DNA-binding</keyword>
<keyword id="KW-1185">Reference proteome</keyword>
<keyword id="KW-0804">Transcription</keyword>
<keyword id="KW-0805">Transcription regulation</keyword>
<feature type="chain" id="PRO_1000075895" description="Transcription elongation factor GreA">
    <location>
        <begin position="1"/>
        <end position="158"/>
    </location>
</feature>
<gene>
    <name evidence="1" type="primary">greA</name>
    <name type="ordered locus">Veis_1146</name>
</gene>
<proteinExistence type="inferred from homology"/>
<name>GREA_VEREI</name>
<evidence type="ECO:0000255" key="1">
    <source>
        <dbReference type="HAMAP-Rule" id="MF_00105"/>
    </source>
</evidence>
<protein>
    <recommendedName>
        <fullName evidence="1">Transcription elongation factor GreA</fullName>
    </recommendedName>
    <alternativeName>
        <fullName evidence="1">Transcript cleavage factor GreA</fullName>
    </alternativeName>
</protein>
<organism>
    <name type="scientific">Verminephrobacter eiseniae (strain EF01-2)</name>
    <dbReference type="NCBI Taxonomy" id="391735"/>
    <lineage>
        <taxon>Bacteria</taxon>
        <taxon>Pseudomonadati</taxon>
        <taxon>Pseudomonadota</taxon>
        <taxon>Betaproteobacteria</taxon>
        <taxon>Burkholderiales</taxon>
        <taxon>Comamonadaceae</taxon>
        <taxon>Verminephrobacter</taxon>
    </lineage>
</organism>
<comment type="function">
    <text evidence="1">Necessary for efficient RNA polymerase transcription elongation past template-encoded arresting sites. The arresting sites in DNA have the property of trapping a certain fraction of elongating RNA polymerases that pass through, resulting in locked ternary complexes. Cleavage of the nascent transcript by cleavage factors such as GreA or GreB allows the resumption of elongation from the new 3'terminus. GreA releases sequences of 2 to 3 nucleotides.</text>
</comment>
<comment type="similarity">
    <text evidence="1">Belongs to the GreA/GreB family.</text>
</comment>
<dbReference type="EMBL" id="CP000542">
    <property type="protein sequence ID" value="ABM56918.1"/>
    <property type="molecule type" value="Genomic_DNA"/>
</dbReference>
<dbReference type="RefSeq" id="WP_011808929.1">
    <property type="nucleotide sequence ID" value="NC_008786.1"/>
</dbReference>
<dbReference type="SMR" id="A1WH11"/>
<dbReference type="STRING" id="391735.Veis_1146"/>
<dbReference type="GeneID" id="76459807"/>
<dbReference type="KEGG" id="vei:Veis_1146"/>
<dbReference type="eggNOG" id="COG0782">
    <property type="taxonomic scope" value="Bacteria"/>
</dbReference>
<dbReference type="HOGENOM" id="CLU_101379_2_0_4"/>
<dbReference type="OrthoDB" id="9808774at2"/>
<dbReference type="Proteomes" id="UP000000374">
    <property type="component" value="Chromosome"/>
</dbReference>
<dbReference type="GO" id="GO:0003677">
    <property type="term" value="F:DNA binding"/>
    <property type="evidence" value="ECO:0007669"/>
    <property type="project" value="UniProtKB-UniRule"/>
</dbReference>
<dbReference type="GO" id="GO:0070063">
    <property type="term" value="F:RNA polymerase binding"/>
    <property type="evidence" value="ECO:0007669"/>
    <property type="project" value="InterPro"/>
</dbReference>
<dbReference type="GO" id="GO:0006354">
    <property type="term" value="P:DNA-templated transcription elongation"/>
    <property type="evidence" value="ECO:0007669"/>
    <property type="project" value="TreeGrafter"/>
</dbReference>
<dbReference type="GO" id="GO:0032784">
    <property type="term" value="P:regulation of DNA-templated transcription elongation"/>
    <property type="evidence" value="ECO:0007669"/>
    <property type="project" value="UniProtKB-UniRule"/>
</dbReference>
<dbReference type="FunFam" id="1.10.287.180:FF:000001">
    <property type="entry name" value="Transcription elongation factor GreA"/>
    <property type="match status" value="1"/>
</dbReference>
<dbReference type="FunFam" id="3.10.50.30:FF:000001">
    <property type="entry name" value="Transcription elongation factor GreA"/>
    <property type="match status" value="1"/>
</dbReference>
<dbReference type="Gene3D" id="3.10.50.30">
    <property type="entry name" value="Transcription elongation factor, GreA/GreB, C-terminal domain"/>
    <property type="match status" value="1"/>
</dbReference>
<dbReference type="Gene3D" id="1.10.287.180">
    <property type="entry name" value="Transcription elongation factor, GreA/GreB, N-terminal domain"/>
    <property type="match status" value="1"/>
</dbReference>
<dbReference type="HAMAP" id="MF_00105">
    <property type="entry name" value="GreA_GreB"/>
    <property type="match status" value="1"/>
</dbReference>
<dbReference type="InterPro" id="IPR036953">
    <property type="entry name" value="GreA/GreB_C_sf"/>
</dbReference>
<dbReference type="InterPro" id="IPR018151">
    <property type="entry name" value="TF_GreA/GreB_CS"/>
</dbReference>
<dbReference type="InterPro" id="IPR006359">
    <property type="entry name" value="Tscrpt_elong_fac_GreA"/>
</dbReference>
<dbReference type="InterPro" id="IPR028624">
    <property type="entry name" value="Tscrpt_elong_fac_GreA/B"/>
</dbReference>
<dbReference type="InterPro" id="IPR001437">
    <property type="entry name" value="Tscrpt_elong_fac_GreA/B_C"/>
</dbReference>
<dbReference type="InterPro" id="IPR023459">
    <property type="entry name" value="Tscrpt_elong_fac_GreA/B_fam"/>
</dbReference>
<dbReference type="InterPro" id="IPR022691">
    <property type="entry name" value="Tscrpt_elong_fac_GreA/B_N"/>
</dbReference>
<dbReference type="InterPro" id="IPR036805">
    <property type="entry name" value="Tscrpt_elong_fac_GreA/B_N_sf"/>
</dbReference>
<dbReference type="NCBIfam" id="TIGR01462">
    <property type="entry name" value="greA"/>
    <property type="match status" value="1"/>
</dbReference>
<dbReference type="NCBIfam" id="NF001261">
    <property type="entry name" value="PRK00226.1-2"/>
    <property type="match status" value="1"/>
</dbReference>
<dbReference type="NCBIfam" id="NF001263">
    <property type="entry name" value="PRK00226.1-4"/>
    <property type="match status" value="1"/>
</dbReference>
<dbReference type="NCBIfam" id="NF001264">
    <property type="entry name" value="PRK00226.1-5"/>
    <property type="match status" value="1"/>
</dbReference>
<dbReference type="PANTHER" id="PTHR30437">
    <property type="entry name" value="TRANSCRIPTION ELONGATION FACTOR GREA"/>
    <property type="match status" value="1"/>
</dbReference>
<dbReference type="PANTHER" id="PTHR30437:SF4">
    <property type="entry name" value="TRANSCRIPTION ELONGATION FACTOR GREA"/>
    <property type="match status" value="1"/>
</dbReference>
<dbReference type="Pfam" id="PF01272">
    <property type="entry name" value="GreA_GreB"/>
    <property type="match status" value="1"/>
</dbReference>
<dbReference type="Pfam" id="PF03449">
    <property type="entry name" value="GreA_GreB_N"/>
    <property type="match status" value="1"/>
</dbReference>
<dbReference type="PIRSF" id="PIRSF006092">
    <property type="entry name" value="GreA_GreB"/>
    <property type="match status" value="1"/>
</dbReference>
<dbReference type="SUPFAM" id="SSF54534">
    <property type="entry name" value="FKBP-like"/>
    <property type="match status" value="1"/>
</dbReference>
<dbReference type="SUPFAM" id="SSF46557">
    <property type="entry name" value="GreA transcript cleavage protein, N-terminal domain"/>
    <property type="match status" value="1"/>
</dbReference>
<dbReference type="PROSITE" id="PS00829">
    <property type="entry name" value="GREAB_1"/>
    <property type="match status" value="1"/>
</dbReference>